<sequence>MAETILIETKTAGGNCRSYLMAGASYLGILCFVPLLMSRDDEYVYFHAKQGLVLWMWSILAMFALHLPGIGKWLFGFSSMGVLMLSVVGLVSVALRRTWRLPLISHVVALI</sequence>
<organism>
    <name type="scientific">Magnetospirillum gryphiswaldense (strain DSM 6361 / JCM 21280 / NBRC 15271 / MSR-1)</name>
    <dbReference type="NCBI Taxonomy" id="431944"/>
    <lineage>
        <taxon>Bacteria</taxon>
        <taxon>Pseudomonadati</taxon>
        <taxon>Pseudomonadota</taxon>
        <taxon>Alphaproteobacteria</taxon>
        <taxon>Rhodospirillales</taxon>
        <taxon>Rhodospirillaceae</taxon>
        <taxon>Magnetospirillum</taxon>
    </lineage>
</organism>
<keyword id="KW-0091">Biomineralization</keyword>
<keyword id="KW-0903">Direct protein sequencing</keyword>
<keyword id="KW-1281">Magnetosome</keyword>
<keyword id="KW-0472">Membrane</keyword>
<keyword id="KW-1185">Reference proteome</keyword>
<keyword id="KW-0812">Transmembrane</keyword>
<keyword id="KW-1133">Transmembrane helix</keyword>
<accession>Q6NE74</accession>
<accession>V6F254</accession>
<proteinExistence type="evidence at protein level"/>
<comment type="function">
    <text evidence="5 7">Plays a role in regulating magnetite crystal size; partially redundant function with MmsF.</text>
</comment>
<comment type="subunit">
    <text evidence="11">May form homooligomers.</text>
</comment>
<comment type="subcellular location">
    <subcellularLocation>
        <location evidence="4 6">Magnetosome membrane</location>
        <topology evidence="2">Multi-pass membrane protein</topology>
    </subcellularLocation>
    <text evidence="1 4 6">Resistant to trypsin digestion in isolated magnetosomes (PubMed:14766587). Localizes as a filament-like structure in a straight line running through the center of the cell, in a position that corresponds to magnetosomes (PubMed:18539817). Requires MamE for correct localization (By similarity).</text>
</comment>
<comment type="induction">
    <text evidence="10">Part of the probable 4 gene mamGFDC operon.</text>
</comment>
<comment type="PTM">
    <text evidence="4">Subject to cleavage or degradation; identified by N-terminal sequencing of proteins that are about 103, 92 and 15 kDa in size.</text>
</comment>
<comment type="disruption phenotype">
    <text evidence="3 5 7">Normal magnetic response, no change in magnetosome size or number. A double mamF-mmsF deletion has a normal magnetic response, slightly smaller, fewer magnetosomes (PubMed:24816605). Deletion of any 2 genes encoded in this operon (mamC, mamD, mamF and mamG) decreases crystal size regardless of the protein combination. Deletion of the mamGFDC operon leads to smaller magnetite crystals in irregularly spaced chains, but no other phenotype (PubMed:17965152). Deletion of approximately 80 kb of DNA, including this operon, leads to cells that are non-magnetic, lack internal membrane systems, grow poorly, have reduced mobility and take-up and accumulate iron poorly (PubMed:13129949).</text>
</comment>
<comment type="miscellaneous">
    <text evidence="10">This bacteria makes up to 60 cubo-octahedral magnetosomes of about 45 nm in diameter which contain membrane-bound crystals of magnetite (Fe(3)O(4)).</text>
</comment>
<comment type="similarity">
    <text evidence="12">Belongs to the magnetosome MamF/MmsF protein family.</text>
</comment>
<reference key="1">
    <citation type="journal article" date="2003" name="J. Bacteriol.">
        <title>Characterization of a spontaneous nonmagnetic mutant of Magnetospirillum gryphiswaldense reveals a large deletion comprising a putative magnetosome island.</title>
        <authorList>
            <person name="Schuebbe S."/>
            <person name="Kube M."/>
            <person name="Scheffel A."/>
            <person name="Wawer C."/>
            <person name="Heyen U."/>
            <person name="Meyerdierks A."/>
            <person name="Madkour M.H."/>
            <person name="Mayer F."/>
            <person name="Reinhardt R."/>
            <person name="Schueler D."/>
        </authorList>
    </citation>
    <scope>NUCLEOTIDE SEQUENCE [GENOMIC DNA]</scope>
    <scope>PROBABLE OPERON</scope>
    <scope>DISRUPTION PHENOTYPE</scope>
    <source>
        <strain>DSM 6361 / JCM 21280 / NBRC 15271 / MSR-1</strain>
    </source>
</reference>
<reference key="2">
    <citation type="journal article" date="2005" name="J. Bacteriol.">
        <title>A hypervariable 130-kilobase genomic region of Magnetospirillum gryphiswaldense comprises a magnetosome island which undergoes frequent rearrangements during stationary growth.</title>
        <authorList>
            <person name="Ullrich S."/>
            <person name="Kube M."/>
            <person name="Schuebbe S."/>
            <person name="Reinhardt R."/>
            <person name="Schueler D."/>
        </authorList>
    </citation>
    <scope>NUCLEOTIDE SEQUENCE [GENOMIC DNA]</scope>
    <source>
        <strain>DSM 6361 / JCM 21280 / NBRC 15271 / MSR-1</strain>
    </source>
</reference>
<reference key="3">
    <citation type="journal article" date="2007" name="J. Bacteriol.">
        <title>Comparative genome analysis of four magnetotactic bacteria reveals a complex set of group-specific genes implicated in magnetosome biomineralization and function.</title>
        <authorList>
            <person name="Richter M."/>
            <person name="Kube M."/>
            <person name="Bazylinski D.A."/>
            <person name="Lombardot T."/>
            <person name="Gloeckner F.O."/>
            <person name="Reinhardt R."/>
            <person name="Schueler D."/>
        </authorList>
    </citation>
    <scope>NUCLEOTIDE SEQUENCE [LARGE SCALE GENOMIC DNA]</scope>
    <source>
        <strain>DSM 6361 / JCM 21280 / NBRC 15271 / MSR-1</strain>
    </source>
</reference>
<reference key="4">
    <citation type="journal article" date="2014" name="Genome Announc.">
        <title>Complete genome sequence of Magnetospirillum gryphiswaldense MSR-1.</title>
        <authorList>
            <person name="Wang X."/>
            <person name="Wang Q."/>
            <person name="Zhang W."/>
            <person name="Wang Y."/>
            <person name="Li L."/>
            <person name="Wen T."/>
            <person name="Zhang T."/>
            <person name="Zhang Y."/>
            <person name="Xu J."/>
            <person name="Hu J."/>
            <person name="Li S."/>
            <person name="Liu L."/>
            <person name="Liu J."/>
            <person name="Jiang W."/>
            <person name="Tian J."/>
            <person name="Li Y."/>
            <person name="Schuler D."/>
            <person name="Wang L."/>
            <person name="Li J."/>
        </authorList>
    </citation>
    <scope>NUCLEOTIDE SEQUENCE [LARGE SCALE GENOMIC DNA]</scope>
    <source>
        <strain>DSM 6361 / JCM 21280 / NBRC 15271 / MSR-1</strain>
    </source>
</reference>
<reference key="5">
    <citation type="journal article" date="2004" name="Appl. Environ. Microbiol.">
        <title>Biochemical and proteomic analysis of the magnetosome membrane in Magnetospirillum gryphiswaldense.</title>
        <authorList>
            <person name="Gruenberg K."/>
            <person name="Mueller E.C."/>
            <person name="Otto A."/>
            <person name="Reszka R."/>
            <person name="Linder D."/>
            <person name="Kube M."/>
            <person name="Reinhardt R."/>
            <person name="Schueler D."/>
        </authorList>
    </citation>
    <scope>PROTEIN SEQUENCE OF 1-12</scope>
    <scope>SUBUNIT</scope>
    <scope>SUBCELLULAR LOCATION</scope>
    <scope>IDENTIFICATION BY MASS SPECTROMETRY</scope>
    <scope>PROTEOLYTIC CLEAVAGE</scope>
    <source>
        <strain>DSM 6361 / JCM 21280 / NBRC 15271 / MSR-1</strain>
    </source>
</reference>
<reference key="6">
    <citation type="journal article" date="2008" name="Appl. Environ. Microbiol.">
        <title>Expression of green fluorescent protein fused to magnetosome proteins in microaerophilic magnetotactic bacteria.</title>
        <authorList>
            <person name="Lang C."/>
            <person name="Schueler D."/>
        </authorList>
    </citation>
    <scope>SUBCELLULAR LOCATION</scope>
    <source>
        <strain>DSM 6361 / JCM 21280 / NBRC 15271 / MSR-1</strain>
    </source>
</reference>
<reference key="7">
    <citation type="journal article" date="2008" name="J. Bacteriol.">
        <title>The major magnetosome proteins MamGFDC are not essential for magnetite biomineralization in Magnetospirillum gryphiswaldense but regulate the size of magnetosome crystals.</title>
        <authorList>
            <person name="Scheffel A."/>
            <person name="Gaerdes A."/>
            <person name="Gruenberg K."/>
            <person name="Wanner G."/>
            <person name="Schueler D."/>
        </authorList>
    </citation>
    <scope>FUNCTION</scope>
    <scope>PROBABLE OPERON</scope>
    <scope>DISRUPTION PHENOTYPE</scope>
    <source>
        <strain>DSM 6361 / JCM 21280 / NBRC 15271 / MSR-1</strain>
    </source>
</reference>
<reference key="8">
    <citation type="journal article" date="2014" name="J. Bacteriol.">
        <title>Genetic dissection of the mamAB and mms6 operons reveals a gene set essential for magnetosome biogenesis in Magnetospirillum gryphiswaldense.</title>
        <authorList>
            <person name="Lohsse A."/>
            <person name="Borg S."/>
            <person name="Raschdorf O."/>
            <person name="Kolinko I."/>
            <person name="Tompa E."/>
            <person name="Posfai M."/>
            <person name="Faivre D."/>
            <person name="Baumgartner J."/>
            <person name="Schueler D."/>
        </authorList>
    </citation>
    <scope>FUNCTION</scope>
    <scope>DISRUPTION PHENOTYPE</scope>
    <source>
        <strain>DSM 6361 / JCM 21280 / NBRC 15271 / MSR-1</strain>
    </source>
</reference>
<dbReference type="EMBL" id="BX571797">
    <property type="protein sequence ID" value="CAE12019.1"/>
    <property type="molecule type" value="Genomic_DNA"/>
</dbReference>
<dbReference type="EMBL" id="AM085146">
    <property type="protein sequence ID" value="CAJ30100.1"/>
    <property type="molecule type" value="Genomic_DNA"/>
</dbReference>
<dbReference type="EMBL" id="CU459003">
    <property type="protein sequence ID" value="CAM78008.1"/>
    <property type="molecule type" value="Genomic_DNA"/>
</dbReference>
<dbReference type="EMBL" id="HG794546">
    <property type="protein sequence ID" value="CDK99610.1"/>
    <property type="molecule type" value="Genomic_DNA"/>
</dbReference>
<dbReference type="RefSeq" id="WP_024080604.1">
    <property type="nucleotide sequence ID" value="NZ_CP027526.1"/>
</dbReference>
<dbReference type="SMR" id="Q6NE74"/>
<dbReference type="STRING" id="1430440.MGMSRv2__2395"/>
<dbReference type="TCDB" id="9.B.89.1.1">
    <property type="family name" value="the putative channel-forming 3 tmss mamf (mamf) family"/>
</dbReference>
<dbReference type="KEGG" id="mgry:MSR1_03200"/>
<dbReference type="KEGG" id="mgy:MGMSRv2__2395"/>
<dbReference type="eggNOG" id="COG4818">
    <property type="taxonomic scope" value="Bacteria"/>
</dbReference>
<dbReference type="HOGENOM" id="CLU_095018_0_1_5"/>
<dbReference type="OrthoDB" id="7357340at2"/>
<dbReference type="Proteomes" id="UP000018922">
    <property type="component" value="Chromosome I"/>
</dbReference>
<dbReference type="GO" id="GO:0110146">
    <property type="term" value="C:magnetosome membrane"/>
    <property type="evidence" value="ECO:0000314"/>
    <property type="project" value="UniProtKB"/>
</dbReference>
<feature type="chain" id="PRO_0000447795" description="Magnetosome protein MamF">
    <location>
        <begin position="1"/>
        <end position="111"/>
    </location>
</feature>
<feature type="topological domain" description="Cytoplasmic" evidence="9">
    <location>
        <begin position="1"/>
        <end position="17"/>
    </location>
</feature>
<feature type="transmembrane region" description="Helical" evidence="2">
    <location>
        <begin position="18"/>
        <end position="38"/>
    </location>
</feature>
<feature type="topological domain" description="Lumenal" evidence="9">
    <location>
        <begin position="39"/>
        <end position="50"/>
    </location>
</feature>
<feature type="transmembrane region" description="Helical" evidence="2">
    <location>
        <begin position="51"/>
        <end position="71"/>
    </location>
</feature>
<feature type="topological domain" description="Cytoplasmic" evidence="9">
    <location>
        <position position="72"/>
    </location>
</feature>
<feature type="transmembrane region" description="Helical" evidence="2">
    <location>
        <begin position="73"/>
        <end position="93"/>
    </location>
</feature>
<feature type="topological domain" description="Lumenal" evidence="9">
    <location>
        <begin position="94"/>
        <end position="111"/>
    </location>
</feature>
<evidence type="ECO:0000250" key="1">
    <source>
        <dbReference type="UniProtKB" id="Q2W8R8"/>
    </source>
</evidence>
<evidence type="ECO:0000255" key="2"/>
<evidence type="ECO:0000269" key="3">
    <source>
    </source>
</evidence>
<evidence type="ECO:0000269" key="4">
    <source>
    </source>
</evidence>
<evidence type="ECO:0000269" key="5">
    <source>
    </source>
</evidence>
<evidence type="ECO:0000269" key="6">
    <source>
    </source>
</evidence>
<evidence type="ECO:0000269" key="7">
    <source>
    </source>
</evidence>
<evidence type="ECO:0000303" key="8">
    <source>
    </source>
</evidence>
<evidence type="ECO:0000305" key="9"/>
<evidence type="ECO:0000305" key="10">
    <source>
    </source>
</evidence>
<evidence type="ECO:0000305" key="11">
    <source>
    </source>
</evidence>
<evidence type="ECO:0000305" key="12">
    <source>
    </source>
</evidence>
<name>MAMF_MAGGM</name>
<protein>
    <recommendedName>
        <fullName evidence="9">Magnetosome protein MamF</fullName>
    </recommendedName>
</protein>
<gene>
    <name evidence="8" type="primary">mamF</name>
    <name type="ordered locus">MGMSRv2__2395</name>
    <name type="ORF">mgI464</name>
    <name type="ORF">MGR_4076</name>
</gene>